<comment type="function">
    <text evidence="1">Component of the A-type ATP synthase that produces ATP from ADP in the presence of a proton gradient across the membrane.</text>
</comment>
<comment type="subunit">
    <text evidence="1">Has multiple subunits with at least A(3), B(3), C, D, E, F, H, I and proteolipid K(x).</text>
</comment>
<comment type="subcellular location">
    <subcellularLocation>
        <location evidence="1">Cell membrane</location>
        <topology evidence="1">Peripheral membrane protein</topology>
    </subcellularLocation>
</comment>
<comment type="similarity">
    <text evidence="1">Belongs to the V-ATPase F subunit family.</text>
</comment>
<name>AATF_THEVO</name>
<gene>
    <name evidence="1" type="primary">atpF</name>
    <name type="ordered locus">TV0050</name>
    <name type="ORF">TVG0051934</name>
</gene>
<protein>
    <recommendedName>
        <fullName evidence="1">A-type ATP synthase subunit F</fullName>
    </recommendedName>
</protein>
<keyword id="KW-0066">ATP synthesis</keyword>
<keyword id="KW-1003">Cell membrane</keyword>
<keyword id="KW-0375">Hydrogen ion transport</keyword>
<keyword id="KW-0406">Ion transport</keyword>
<keyword id="KW-0472">Membrane</keyword>
<keyword id="KW-0813">Transport</keyword>
<reference key="1">
    <citation type="journal article" date="2000" name="Proc. Natl. Acad. Sci. U.S.A.">
        <title>Archaeal adaptation to higher temperatures revealed by genomic sequence of Thermoplasma volcanium.</title>
        <authorList>
            <person name="Kawashima T."/>
            <person name="Amano N."/>
            <person name="Koike H."/>
            <person name="Makino S."/>
            <person name="Higuchi S."/>
            <person name="Kawashima-Ohya Y."/>
            <person name="Watanabe K."/>
            <person name="Yamazaki M."/>
            <person name="Kanehori K."/>
            <person name="Kawamoto T."/>
            <person name="Nunoshiba T."/>
            <person name="Yamamoto Y."/>
            <person name="Aramaki H."/>
            <person name="Makino K."/>
            <person name="Suzuki M."/>
        </authorList>
    </citation>
    <scope>NUCLEOTIDE SEQUENCE [LARGE SCALE GENOMIC DNA]</scope>
    <source>
        <strain>ATCC 51530 / DSM 4299 / JCM 9571 / NBRC 15438 / GSS1</strain>
    </source>
</reference>
<feature type="chain" id="PRO_0000144826" description="A-type ATP synthase subunit F">
    <location>
        <begin position="1"/>
        <end position="104"/>
    </location>
</feature>
<proteinExistence type="inferred from homology"/>
<evidence type="ECO:0000255" key="1">
    <source>
        <dbReference type="HAMAP-Rule" id="MF_00312"/>
    </source>
</evidence>
<sequence>MQSCITVIGERDVVLGFRLLGITNTIVAEGKDLVKKFMEEFENPHCSVIVVSEHLKNMIDKKTLRSIEVSSKPLVVFIPLPGFKEEESIETMAKRILGIDIGSV</sequence>
<organism>
    <name type="scientific">Thermoplasma volcanium (strain ATCC 51530 / DSM 4299 / JCM 9571 / NBRC 15438 / GSS1)</name>
    <dbReference type="NCBI Taxonomy" id="273116"/>
    <lineage>
        <taxon>Archaea</taxon>
        <taxon>Methanobacteriati</taxon>
        <taxon>Thermoplasmatota</taxon>
        <taxon>Thermoplasmata</taxon>
        <taxon>Thermoplasmatales</taxon>
        <taxon>Thermoplasmataceae</taxon>
        <taxon>Thermoplasma</taxon>
    </lineage>
</organism>
<accession>Q97CQ1</accession>
<dbReference type="EMBL" id="BA000011">
    <property type="protein sequence ID" value="BAB59192.1"/>
    <property type="molecule type" value="Genomic_DNA"/>
</dbReference>
<dbReference type="RefSeq" id="WP_010916307.1">
    <property type="nucleotide sequence ID" value="NC_002689.2"/>
</dbReference>
<dbReference type="SMR" id="Q97CQ1"/>
<dbReference type="STRING" id="273116.gene:9380815"/>
<dbReference type="PaxDb" id="273116-14324264"/>
<dbReference type="GeneID" id="1441537"/>
<dbReference type="KEGG" id="tvo:TVG0051934"/>
<dbReference type="eggNOG" id="arCOG04102">
    <property type="taxonomic scope" value="Archaea"/>
</dbReference>
<dbReference type="HOGENOM" id="CLU_2313886_0_0_2"/>
<dbReference type="OrthoDB" id="24971at2157"/>
<dbReference type="Proteomes" id="UP000001017">
    <property type="component" value="Chromosome"/>
</dbReference>
<dbReference type="GO" id="GO:0005886">
    <property type="term" value="C:plasma membrane"/>
    <property type="evidence" value="ECO:0007669"/>
    <property type="project" value="UniProtKB-SubCell"/>
</dbReference>
<dbReference type="GO" id="GO:0005524">
    <property type="term" value="F:ATP binding"/>
    <property type="evidence" value="ECO:0007669"/>
    <property type="project" value="UniProtKB-UniRule"/>
</dbReference>
<dbReference type="GO" id="GO:0046933">
    <property type="term" value="F:proton-transporting ATP synthase activity, rotational mechanism"/>
    <property type="evidence" value="ECO:0007669"/>
    <property type="project" value="UniProtKB-UniRule"/>
</dbReference>
<dbReference type="GO" id="GO:0046961">
    <property type="term" value="F:proton-transporting ATPase activity, rotational mechanism"/>
    <property type="evidence" value="ECO:0007669"/>
    <property type="project" value="InterPro"/>
</dbReference>
<dbReference type="GO" id="GO:0042777">
    <property type="term" value="P:proton motive force-driven plasma membrane ATP synthesis"/>
    <property type="evidence" value="ECO:0007669"/>
    <property type="project" value="UniProtKB-UniRule"/>
</dbReference>
<dbReference type="Gene3D" id="3.40.50.10580">
    <property type="entry name" value="ATPase, V1 complex, subunit F"/>
    <property type="match status" value="1"/>
</dbReference>
<dbReference type="HAMAP" id="MF_00312">
    <property type="entry name" value="ATP_synth_F_arch"/>
    <property type="match status" value="1"/>
</dbReference>
<dbReference type="InterPro" id="IPR008218">
    <property type="entry name" value="ATPase_V1-cplx_f_g_su"/>
</dbReference>
<dbReference type="InterPro" id="IPR022944">
    <property type="entry name" value="ATPase_V1-cplx_fsu_bac/arc"/>
</dbReference>
<dbReference type="InterPro" id="IPR036906">
    <property type="entry name" value="ATPase_V1_fsu_sf"/>
</dbReference>
<dbReference type="NCBIfam" id="NF002256">
    <property type="entry name" value="PRK01189.1"/>
    <property type="match status" value="1"/>
</dbReference>
<dbReference type="Pfam" id="PF01990">
    <property type="entry name" value="ATP-synt_F"/>
    <property type="match status" value="1"/>
</dbReference>
<dbReference type="SUPFAM" id="SSF159468">
    <property type="entry name" value="AtpF-like"/>
    <property type="match status" value="1"/>
</dbReference>